<dbReference type="EMBL" id="AL646052">
    <property type="protein sequence ID" value="CAD15946.1"/>
    <property type="molecule type" value="Genomic_DNA"/>
</dbReference>
<dbReference type="SMR" id="Q8XX77"/>
<dbReference type="STRING" id="267608.RSc2239"/>
<dbReference type="EnsemblBacteria" id="CAD15946">
    <property type="protein sequence ID" value="CAD15946"/>
    <property type="gene ID" value="RSc2239"/>
</dbReference>
<dbReference type="KEGG" id="rso:RSc2239"/>
<dbReference type="eggNOG" id="COG0361">
    <property type="taxonomic scope" value="Bacteria"/>
</dbReference>
<dbReference type="HOGENOM" id="CLU_151267_1_0_4"/>
<dbReference type="Proteomes" id="UP000001436">
    <property type="component" value="Chromosome"/>
</dbReference>
<dbReference type="GO" id="GO:0005829">
    <property type="term" value="C:cytosol"/>
    <property type="evidence" value="ECO:0007669"/>
    <property type="project" value="TreeGrafter"/>
</dbReference>
<dbReference type="GO" id="GO:0043022">
    <property type="term" value="F:ribosome binding"/>
    <property type="evidence" value="ECO:0007669"/>
    <property type="project" value="UniProtKB-UniRule"/>
</dbReference>
<dbReference type="GO" id="GO:0019843">
    <property type="term" value="F:rRNA binding"/>
    <property type="evidence" value="ECO:0007669"/>
    <property type="project" value="UniProtKB-UniRule"/>
</dbReference>
<dbReference type="GO" id="GO:0003743">
    <property type="term" value="F:translation initiation factor activity"/>
    <property type="evidence" value="ECO:0007669"/>
    <property type="project" value="UniProtKB-UniRule"/>
</dbReference>
<dbReference type="CDD" id="cd04451">
    <property type="entry name" value="S1_IF1"/>
    <property type="match status" value="1"/>
</dbReference>
<dbReference type="FunFam" id="2.40.50.140:FF:000002">
    <property type="entry name" value="Translation initiation factor IF-1"/>
    <property type="match status" value="1"/>
</dbReference>
<dbReference type="Gene3D" id="2.40.50.140">
    <property type="entry name" value="Nucleic acid-binding proteins"/>
    <property type="match status" value="1"/>
</dbReference>
<dbReference type="HAMAP" id="MF_00075">
    <property type="entry name" value="IF_1"/>
    <property type="match status" value="1"/>
</dbReference>
<dbReference type="InterPro" id="IPR012340">
    <property type="entry name" value="NA-bd_OB-fold"/>
</dbReference>
<dbReference type="InterPro" id="IPR006196">
    <property type="entry name" value="RNA-binding_domain_S1_IF1"/>
</dbReference>
<dbReference type="InterPro" id="IPR003029">
    <property type="entry name" value="S1_domain"/>
</dbReference>
<dbReference type="InterPro" id="IPR004368">
    <property type="entry name" value="TIF_IF1"/>
</dbReference>
<dbReference type="NCBIfam" id="TIGR00008">
    <property type="entry name" value="infA"/>
    <property type="match status" value="1"/>
</dbReference>
<dbReference type="PANTHER" id="PTHR33370">
    <property type="entry name" value="TRANSLATION INITIATION FACTOR IF-1, CHLOROPLASTIC"/>
    <property type="match status" value="1"/>
</dbReference>
<dbReference type="PANTHER" id="PTHR33370:SF1">
    <property type="entry name" value="TRANSLATION INITIATION FACTOR IF-1, CHLOROPLASTIC"/>
    <property type="match status" value="1"/>
</dbReference>
<dbReference type="Pfam" id="PF01176">
    <property type="entry name" value="eIF-1a"/>
    <property type="match status" value="1"/>
</dbReference>
<dbReference type="SMART" id="SM00316">
    <property type="entry name" value="S1"/>
    <property type="match status" value="1"/>
</dbReference>
<dbReference type="SUPFAM" id="SSF50249">
    <property type="entry name" value="Nucleic acid-binding proteins"/>
    <property type="match status" value="1"/>
</dbReference>
<dbReference type="PROSITE" id="PS50832">
    <property type="entry name" value="S1_IF1_TYPE"/>
    <property type="match status" value="1"/>
</dbReference>
<name>IF12_RALN1</name>
<proteinExistence type="inferred from homology"/>
<gene>
    <name evidence="1" type="primary">infA2</name>
    <name type="ordered locus">RSc2239</name>
    <name type="ORF">RS01360</name>
</gene>
<accession>Q8XX77</accession>
<reference key="1">
    <citation type="journal article" date="2002" name="Nature">
        <title>Genome sequence of the plant pathogen Ralstonia solanacearum.</title>
        <authorList>
            <person name="Salanoubat M."/>
            <person name="Genin S."/>
            <person name="Artiguenave F."/>
            <person name="Gouzy J."/>
            <person name="Mangenot S."/>
            <person name="Arlat M."/>
            <person name="Billault A."/>
            <person name="Brottier P."/>
            <person name="Camus J.-C."/>
            <person name="Cattolico L."/>
            <person name="Chandler M."/>
            <person name="Choisne N."/>
            <person name="Claudel-Renard C."/>
            <person name="Cunnac S."/>
            <person name="Demange N."/>
            <person name="Gaspin C."/>
            <person name="Lavie M."/>
            <person name="Moisan A."/>
            <person name="Robert C."/>
            <person name="Saurin W."/>
            <person name="Schiex T."/>
            <person name="Siguier P."/>
            <person name="Thebault P."/>
            <person name="Whalen M."/>
            <person name="Wincker P."/>
            <person name="Levy M."/>
            <person name="Weissenbach J."/>
            <person name="Boucher C.A."/>
        </authorList>
    </citation>
    <scope>NUCLEOTIDE SEQUENCE [LARGE SCALE GENOMIC DNA]</scope>
    <source>
        <strain>ATCC BAA-1114 / GMI1000</strain>
    </source>
</reference>
<comment type="function">
    <text evidence="1">One of the essential components for the initiation of protein synthesis. Stabilizes the binding of IF-2 and IF-3 on the 30S subunit to which N-formylmethionyl-tRNA(fMet) subsequently binds. Helps modulate mRNA selection, yielding the 30S pre-initiation complex (PIC). Upon addition of the 50S ribosomal subunit IF-1, IF-2 and IF-3 are released leaving the mature 70S translation initiation complex.</text>
</comment>
<comment type="subunit">
    <text evidence="1">Component of the 30S ribosomal translation pre-initiation complex which assembles on the 30S ribosome in the order IF-2 and IF-3, IF-1 and N-formylmethionyl-tRNA(fMet); mRNA recruitment can occur at any time during PIC assembly.</text>
</comment>
<comment type="subcellular location">
    <subcellularLocation>
        <location evidence="1">Cytoplasm</location>
    </subcellularLocation>
</comment>
<comment type="similarity">
    <text evidence="1">Belongs to the IF-1 family.</text>
</comment>
<keyword id="KW-0963">Cytoplasm</keyword>
<keyword id="KW-0396">Initiation factor</keyword>
<keyword id="KW-0648">Protein biosynthesis</keyword>
<keyword id="KW-1185">Reference proteome</keyword>
<keyword id="KW-0694">RNA-binding</keyword>
<keyword id="KW-0699">rRNA-binding</keyword>
<sequence>MAKEELIEFEGVVSEALPDNRFRVQLENGVEVWAYASGKMQKHRIRILAGDRVKLEMSPYDLTKGRINYRHK</sequence>
<feature type="chain" id="PRO_0000095848" description="Translation initiation factor IF-1 2">
    <location>
        <begin position="1"/>
        <end position="72"/>
    </location>
</feature>
<feature type="domain" description="S1-like" evidence="1">
    <location>
        <begin position="1"/>
        <end position="72"/>
    </location>
</feature>
<protein>
    <recommendedName>
        <fullName evidence="1">Translation initiation factor IF-1 2</fullName>
    </recommendedName>
</protein>
<evidence type="ECO:0000255" key="1">
    <source>
        <dbReference type="HAMAP-Rule" id="MF_00075"/>
    </source>
</evidence>
<organism>
    <name type="scientific">Ralstonia nicotianae (strain ATCC BAA-1114 / GMI1000)</name>
    <name type="common">Ralstonia solanacearum</name>
    <dbReference type="NCBI Taxonomy" id="267608"/>
    <lineage>
        <taxon>Bacteria</taxon>
        <taxon>Pseudomonadati</taxon>
        <taxon>Pseudomonadota</taxon>
        <taxon>Betaproteobacteria</taxon>
        <taxon>Burkholderiales</taxon>
        <taxon>Burkholderiaceae</taxon>
        <taxon>Ralstonia</taxon>
        <taxon>Ralstonia solanacearum species complex</taxon>
    </lineage>
</organism>